<dbReference type="EC" id="2.7.7.6" evidence="1"/>
<dbReference type="EMBL" id="CU207211">
    <property type="protein sequence ID" value="CAL63250.1"/>
    <property type="molecule type" value="Genomic_DNA"/>
</dbReference>
<dbReference type="SMR" id="A4G9R3"/>
<dbReference type="STRING" id="204773.HEAR3141"/>
<dbReference type="KEGG" id="har:HEAR3141"/>
<dbReference type="eggNOG" id="COG0202">
    <property type="taxonomic scope" value="Bacteria"/>
</dbReference>
<dbReference type="HOGENOM" id="CLU_053084_0_0_4"/>
<dbReference type="OrthoDB" id="9805706at2"/>
<dbReference type="Proteomes" id="UP000006697">
    <property type="component" value="Chromosome"/>
</dbReference>
<dbReference type="GO" id="GO:0005737">
    <property type="term" value="C:cytoplasm"/>
    <property type="evidence" value="ECO:0007669"/>
    <property type="project" value="UniProtKB-ARBA"/>
</dbReference>
<dbReference type="GO" id="GO:0000428">
    <property type="term" value="C:DNA-directed RNA polymerase complex"/>
    <property type="evidence" value="ECO:0007669"/>
    <property type="project" value="UniProtKB-KW"/>
</dbReference>
<dbReference type="GO" id="GO:0003677">
    <property type="term" value="F:DNA binding"/>
    <property type="evidence" value="ECO:0007669"/>
    <property type="project" value="UniProtKB-UniRule"/>
</dbReference>
<dbReference type="GO" id="GO:0003899">
    <property type="term" value="F:DNA-directed RNA polymerase activity"/>
    <property type="evidence" value="ECO:0007669"/>
    <property type="project" value="UniProtKB-UniRule"/>
</dbReference>
<dbReference type="GO" id="GO:0046983">
    <property type="term" value="F:protein dimerization activity"/>
    <property type="evidence" value="ECO:0007669"/>
    <property type="project" value="InterPro"/>
</dbReference>
<dbReference type="GO" id="GO:0006351">
    <property type="term" value="P:DNA-templated transcription"/>
    <property type="evidence" value="ECO:0007669"/>
    <property type="project" value="UniProtKB-UniRule"/>
</dbReference>
<dbReference type="CDD" id="cd06928">
    <property type="entry name" value="RNAP_alpha_NTD"/>
    <property type="match status" value="1"/>
</dbReference>
<dbReference type="FunFam" id="1.10.150.20:FF:000001">
    <property type="entry name" value="DNA-directed RNA polymerase subunit alpha"/>
    <property type="match status" value="1"/>
</dbReference>
<dbReference type="FunFam" id="2.170.120.12:FF:000001">
    <property type="entry name" value="DNA-directed RNA polymerase subunit alpha"/>
    <property type="match status" value="1"/>
</dbReference>
<dbReference type="Gene3D" id="1.10.150.20">
    <property type="entry name" value="5' to 3' exonuclease, C-terminal subdomain"/>
    <property type="match status" value="1"/>
</dbReference>
<dbReference type="Gene3D" id="2.170.120.12">
    <property type="entry name" value="DNA-directed RNA polymerase, insert domain"/>
    <property type="match status" value="1"/>
</dbReference>
<dbReference type="Gene3D" id="3.30.1360.10">
    <property type="entry name" value="RNA polymerase, RBP11-like subunit"/>
    <property type="match status" value="1"/>
</dbReference>
<dbReference type="HAMAP" id="MF_00059">
    <property type="entry name" value="RNApol_bact_RpoA"/>
    <property type="match status" value="1"/>
</dbReference>
<dbReference type="InterPro" id="IPR011262">
    <property type="entry name" value="DNA-dir_RNA_pol_insert"/>
</dbReference>
<dbReference type="InterPro" id="IPR011263">
    <property type="entry name" value="DNA-dir_RNA_pol_RpoA/D/Rpb3"/>
</dbReference>
<dbReference type="InterPro" id="IPR011773">
    <property type="entry name" value="DNA-dir_RpoA"/>
</dbReference>
<dbReference type="InterPro" id="IPR036603">
    <property type="entry name" value="RBP11-like"/>
</dbReference>
<dbReference type="InterPro" id="IPR011260">
    <property type="entry name" value="RNAP_asu_C"/>
</dbReference>
<dbReference type="InterPro" id="IPR036643">
    <property type="entry name" value="RNApol_insert_sf"/>
</dbReference>
<dbReference type="NCBIfam" id="NF003513">
    <property type="entry name" value="PRK05182.1-2"/>
    <property type="match status" value="1"/>
</dbReference>
<dbReference type="NCBIfam" id="NF003519">
    <property type="entry name" value="PRK05182.2-5"/>
    <property type="match status" value="1"/>
</dbReference>
<dbReference type="NCBIfam" id="TIGR02027">
    <property type="entry name" value="rpoA"/>
    <property type="match status" value="1"/>
</dbReference>
<dbReference type="Pfam" id="PF01000">
    <property type="entry name" value="RNA_pol_A_bac"/>
    <property type="match status" value="1"/>
</dbReference>
<dbReference type="Pfam" id="PF03118">
    <property type="entry name" value="RNA_pol_A_CTD"/>
    <property type="match status" value="1"/>
</dbReference>
<dbReference type="Pfam" id="PF01193">
    <property type="entry name" value="RNA_pol_L"/>
    <property type="match status" value="1"/>
</dbReference>
<dbReference type="SMART" id="SM00662">
    <property type="entry name" value="RPOLD"/>
    <property type="match status" value="1"/>
</dbReference>
<dbReference type="SUPFAM" id="SSF47789">
    <property type="entry name" value="C-terminal domain of RNA polymerase alpha subunit"/>
    <property type="match status" value="1"/>
</dbReference>
<dbReference type="SUPFAM" id="SSF56553">
    <property type="entry name" value="Insert subdomain of RNA polymerase alpha subunit"/>
    <property type="match status" value="1"/>
</dbReference>
<dbReference type="SUPFAM" id="SSF55257">
    <property type="entry name" value="RBP11-like subunits of RNA polymerase"/>
    <property type="match status" value="1"/>
</dbReference>
<keyword id="KW-0240">DNA-directed RNA polymerase</keyword>
<keyword id="KW-0548">Nucleotidyltransferase</keyword>
<keyword id="KW-1185">Reference proteome</keyword>
<keyword id="KW-0804">Transcription</keyword>
<keyword id="KW-0808">Transferase</keyword>
<comment type="function">
    <text evidence="1">DNA-dependent RNA polymerase catalyzes the transcription of DNA into RNA using the four ribonucleoside triphosphates as substrates.</text>
</comment>
<comment type="catalytic activity">
    <reaction evidence="1">
        <text>RNA(n) + a ribonucleoside 5'-triphosphate = RNA(n+1) + diphosphate</text>
        <dbReference type="Rhea" id="RHEA:21248"/>
        <dbReference type="Rhea" id="RHEA-COMP:14527"/>
        <dbReference type="Rhea" id="RHEA-COMP:17342"/>
        <dbReference type="ChEBI" id="CHEBI:33019"/>
        <dbReference type="ChEBI" id="CHEBI:61557"/>
        <dbReference type="ChEBI" id="CHEBI:140395"/>
        <dbReference type="EC" id="2.7.7.6"/>
    </reaction>
</comment>
<comment type="subunit">
    <text evidence="1">Homodimer. The RNAP catalytic core consists of 2 alpha, 1 beta, 1 beta' and 1 omega subunit. When a sigma factor is associated with the core the holoenzyme is formed, which can initiate transcription.</text>
</comment>
<comment type="domain">
    <text evidence="1">The N-terminal domain is essential for RNAP assembly and basal transcription, whereas the C-terminal domain is involved in interaction with transcriptional regulators and with upstream promoter elements.</text>
</comment>
<comment type="similarity">
    <text evidence="1">Belongs to the RNA polymerase alpha chain family.</text>
</comment>
<name>RPOA_HERAR</name>
<evidence type="ECO:0000255" key="1">
    <source>
        <dbReference type="HAMAP-Rule" id="MF_00059"/>
    </source>
</evidence>
<feature type="chain" id="PRO_0000296819" description="DNA-directed RNA polymerase subunit alpha">
    <location>
        <begin position="1"/>
        <end position="325"/>
    </location>
</feature>
<feature type="region of interest" description="Alpha N-terminal domain (alpha-NTD)" evidence="1">
    <location>
        <begin position="1"/>
        <end position="231"/>
    </location>
</feature>
<feature type="region of interest" description="Alpha C-terminal domain (alpha-CTD)" evidence="1">
    <location>
        <begin position="246"/>
        <end position="325"/>
    </location>
</feature>
<gene>
    <name evidence="1" type="primary">rpoA</name>
    <name type="ordered locus">HEAR3141</name>
</gene>
<accession>A4G9R3</accession>
<sequence length="325" mass="35594">MQNSLLKPRIIEVEVLGAGHAKVVMEPFERGYGHTLGNALRRVLLSSMVGYAPTEVTIAGVVHEYSSLDGVQEDVVDLLLNLKGVVFKLHNRDDVTLTLKKEGEGAVLASDIELPHDVELVNPDHVIAHLTAGGKLDMQIKVEKGRGYVPGNVRRLSEDTNKTIGRIILDASFSPVRRVSYAVESARVEQRTDLDKLVINIETNGVITPEEAIRQSARVLVDQLNVFAALEGTEAPADAPSRAPAVDPILLRPVDDLELTVRSANCLKAENIYYIGDLIQRSENELLKTPNLGRKSLNEIKEVLASRGLTLGMKLENWPPAGLEK</sequence>
<reference key="1">
    <citation type="journal article" date="2007" name="PLoS Genet.">
        <title>A tale of two oxidation states: bacterial colonization of arsenic-rich environments.</title>
        <authorList>
            <person name="Muller D."/>
            <person name="Medigue C."/>
            <person name="Koechler S."/>
            <person name="Barbe V."/>
            <person name="Barakat M."/>
            <person name="Talla E."/>
            <person name="Bonnefoy V."/>
            <person name="Krin E."/>
            <person name="Arsene-Ploetze F."/>
            <person name="Carapito C."/>
            <person name="Chandler M."/>
            <person name="Cournoyer B."/>
            <person name="Cruveiller S."/>
            <person name="Dossat C."/>
            <person name="Duval S."/>
            <person name="Heymann M."/>
            <person name="Leize E."/>
            <person name="Lieutaud A."/>
            <person name="Lievremont D."/>
            <person name="Makita Y."/>
            <person name="Mangenot S."/>
            <person name="Nitschke W."/>
            <person name="Ortet P."/>
            <person name="Perdrial N."/>
            <person name="Schoepp B."/>
            <person name="Siguier P."/>
            <person name="Simeonova D.D."/>
            <person name="Rouy Z."/>
            <person name="Segurens B."/>
            <person name="Turlin E."/>
            <person name="Vallenet D."/>
            <person name="van Dorsselaer A."/>
            <person name="Weiss S."/>
            <person name="Weissenbach J."/>
            <person name="Lett M.-C."/>
            <person name="Danchin A."/>
            <person name="Bertin P.N."/>
        </authorList>
    </citation>
    <scope>NUCLEOTIDE SEQUENCE [LARGE SCALE GENOMIC DNA]</scope>
    <source>
        <strain>ULPAs1</strain>
    </source>
</reference>
<protein>
    <recommendedName>
        <fullName evidence="1">DNA-directed RNA polymerase subunit alpha</fullName>
        <shortName evidence="1">RNAP subunit alpha</shortName>
        <ecNumber evidence="1">2.7.7.6</ecNumber>
    </recommendedName>
    <alternativeName>
        <fullName evidence="1">RNA polymerase subunit alpha</fullName>
    </alternativeName>
    <alternativeName>
        <fullName evidence="1">Transcriptase subunit alpha</fullName>
    </alternativeName>
</protein>
<organism>
    <name type="scientific">Herminiimonas arsenicoxydans</name>
    <dbReference type="NCBI Taxonomy" id="204773"/>
    <lineage>
        <taxon>Bacteria</taxon>
        <taxon>Pseudomonadati</taxon>
        <taxon>Pseudomonadota</taxon>
        <taxon>Betaproteobacteria</taxon>
        <taxon>Burkholderiales</taxon>
        <taxon>Oxalobacteraceae</taxon>
        <taxon>Herminiimonas</taxon>
    </lineage>
</organism>
<proteinExistence type="inferred from homology"/>